<proteinExistence type="inferred from homology"/>
<organism>
    <name type="scientific">Cutibacterium acnes (strain DSM 16379 / KPA171202)</name>
    <name type="common">Propionibacterium acnes</name>
    <dbReference type="NCBI Taxonomy" id="267747"/>
    <lineage>
        <taxon>Bacteria</taxon>
        <taxon>Bacillati</taxon>
        <taxon>Actinomycetota</taxon>
        <taxon>Actinomycetes</taxon>
        <taxon>Propionibacteriales</taxon>
        <taxon>Propionibacteriaceae</taxon>
        <taxon>Cutibacterium</taxon>
    </lineage>
</organism>
<name>ATPE_CUTAK</name>
<comment type="function">
    <text evidence="1">Produces ATP from ADP in the presence of a proton gradient across the membrane.</text>
</comment>
<comment type="subunit">
    <text>F-type ATPases have 2 components, CF(1) - the catalytic core - and CF(0) - the membrane proton channel. CF(1) has five subunits: alpha(3), beta(3), gamma(1), delta(1), epsilon(1). CF(0) has three main subunits: a, b and c.</text>
</comment>
<comment type="subcellular location">
    <subcellularLocation>
        <location evidence="1">Cell membrane</location>
        <topology evidence="1">Peripheral membrane protein</topology>
    </subcellularLocation>
</comment>
<comment type="similarity">
    <text evidence="1">Belongs to the ATPase epsilon chain family.</text>
</comment>
<dbReference type="EMBL" id="AE017283">
    <property type="protein sequence ID" value="AAT82987.1"/>
    <property type="molecule type" value="Genomic_DNA"/>
</dbReference>
<dbReference type="RefSeq" id="WP_002516827.1">
    <property type="nucleotide sequence ID" value="NZ_CP025935.1"/>
</dbReference>
<dbReference type="SMR" id="Q6A8C8"/>
<dbReference type="EnsemblBacteria" id="AAT82987">
    <property type="protein sequence ID" value="AAT82987"/>
    <property type="gene ID" value="PPA1238"/>
</dbReference>
<dbReference type="KEGG" id="pac:PPA1238"/>
<dbReference type="eggNOG" id="COG0355">
    <property type="taxonomic scope" value="Bacteria"/>
</dbReference>
<dbReference type="HOGENOM" id="CLU_084338_1_3_11"/>
<dbReference type="Proteomes" id="UP000000603">
    <property type="component" value="Chromosome"/>
</dbReference>
<dbReference type="GO" id="GO:0005886">
    <property type="term" value="C:plasma membrane"/>
    <property type="evidence" value="ECO:0007669"/>
    <property type="project" value="UniProtKB-SubCell"/>
</dbReference>
<dbReference type="GO" id="GO:0045259">
    <property type="term" value="C:proton-transporting ATP synthase complex"/>
    <property type="evidence" value="ECO:0007669"/>
    <property type="project" value="UniProtKB-KW"/>
</dbReference>
<dbReference type="GO" id="GO:0005524">
    <property type="term" value="F:ATP binding"/>
    <property type="evidence" value="ECO:0007669"/>
    <property type="project" value="UniProtKB-UniRule"/>
</dbReference>
<dbReference type="GO" id="GO:0046933">
    <property type="term" value="F:proton-transporting ATP synthase activity, rotational mechanism"/>
    <property type="evidence" value="ECO:0007669"/>
    <property type="project" value="UniProtKB-UniRule"/>
</dbReference>
<dbReference type="CDD" id="cd12152">
    <property type="entry name" value="F1-ATPase_delta"/>
    <property type="match status" value="1"/>
</dbReference>
<dbReference type="Gene3D" id="2.60.15.10">
    <property type="entry name" value="F0F1 ATP synthase delta/epsilon subunit, N-terminal"/>
    <property type="match status" value="1"/>
</dbReference>
<dbReference type="HAMAP" id="MF_00530">
    <property type="entry name" value="ATP_synth_epsil_bac"/>
    <property type="match status" value="1"/>
</dbReference>
<dbReference type="InterPro" id="IPR001469">
    <property type="entry name" value="ATP_synth_F1_dsu/esu"/>
</dbReference>
<dbReference type="InterPro" id="IPR020546">
    <property type="entry name" value="ATP_synth_F1_dsu/esu_N"/>
</dbReference>
<dbReference type="InterPro" id="IPR036771">
    <property type="entry name" value="ATPsynth_dsu/esu_N"/>
</dbReference>
<dbReference type="NCBIfam" id="TIGR01216">
    <property type="entry name" value="ATP_synt_epsi"/>
    <property type="match status" value="1"/>
</dbReference>
<dbReference type="NCBIfam" id="NF009977">
    <property type="entry name" value="PRK13442.1"/>
    <property type="match status" value="1"/>
</dbReference>
<dbReference type="PANTHER" id="PTHR13822">
    <property type="entry name" value="ATP SYNTHASE DELTA/EPSILON CHAIN"/>
    <property type="match status" value="1"/>
</dbReference>
<dbReference type="PANTHER" id="PTHR13822:SF10">
    <property type="entry name" value="ATP SYNTHASE EPSILON CHAIN, CHLOROPLASTIC"/>
    <property type="match status" value="1"/>
</dbReference>
<dbReference type="Pfam" id="PF02823">
    <property type="entry name" value="ATP-synt_DE_N"/>
    <property type="match status" value="1"/>
</dbReference>
<dbReference type="SUPFAM" id="SSF51344">
    <property type="entry name" value="Epsilon subunit of F1F0-ATP synthase N-terminal domain"/>
    <property type="match status" value="1"/>
</dbReference>
<keyword id="KW-0066">ATP synthesis</keyword>
<keyword id="KW-1003">Cell membrane</keyword>
<keyword id="KW-0139">CF(1)</keyword>
<keyword id="KW-0375">Hydrogen ion transport</keyword>
<keyword id="KW-0406">Ion transport</keyword>
<keyword id="KW-0472">Membrane</keyword>
<keyword id="KW-0813">Transport</keyword>
<accession>Q6A8C8</accession>
<evidence type="ECO:0000255" key="1">
    <source>
        <dbReference type="HAMAP-Rule" id="MF_00530"/>
    </source>
</evidence>
<evidence type="ECO:0000256" key="2">
    <source>
        <dbReference type="SAM" id="MobiDB-lite"/>
    </source>
</evidence>
<protein>
    <recommendedName>
        <fullName evidence="1">ATP synthase epsilon chain</fullName>
    </recommendedName>
    <alternativeName>
        <fullName evidence="1">ATP synthase F1 sector epsilon subunit</fullName>
    </alternativeName>
    <alternativeName>
        <fullName evidence="1">F-ATPase epsilon subunit</fullName>
    </alternativeName>
</protein>
<reference key="1">
    <citation type="journal article" date="2004" name="Science">
        <title>The complete genome sequence of Propionibacterium acnes, a commensal of human skin.</title>
        <authorList>
            <person name="Brueggemann H."/>
            <person name="Henne A."/>
            <person name="Hoster F."/>
            <person name="Liesegang H."/>
            <person name="Wiezer A."/>
            <person name="Strittmatter A."/>
            <person name="Hujer S."/>
            <person name="Duerre P."/>
            <person name="Gottschalk G."/>
        </authorList>
    </citation>
    <scope>NUCLEOTIDE SEQUENCE [LARGE SCALE GENOMIC DNA]</scope>
    <source>
        <strain>DSM 16379 / KPA171202</strain>
    </source>
</reference>
<feature type="chain" id="PRO_0000188174" description="ATP synthase epsilon chain">
    <location>
        <begin position="1"/>
        <end position="146"/>
    </location>
</feature>
<feature type="region of interest" description="Disordered" evidence="2">
    <location>
        <begin position="92"/>
        <end position="120"/>
    </location>
</feature>
<feature type="compositionally biased region" description="Basic and acidic residues" evidence="2">
    <location>
        <begin position="92"/>
        <end position="116"/>
    </location>
</feature>
<sequence length="146" mass="16030">MDHPPLQVKVVSADREVWKGESVNIIVRTTEGDIGLLPGHEAFLAALAPCAAQIITTDGNREVIACDGGFVALDNDGQVSIITQYATRSEEISVDQARRDRDSLRKKLNEHERSEQDPEVVQDLTHRLHLAQAQIAAARLAGKQRS</sequence>
<gene>
    <name evidence="1" type="primary">atpC</name>
    <name type="ordered locus">PPA1238</name>
</gene>